<organism>
    <name type="scientific">Equine herpesvirus 1 (strain V592)</name>
    <name type="common">EHV-1</name>
    <name type="synonym">Equine abortion virus</name>
    <dbReference type="NCBI Taxonomy" id="310273"/>
    <lineage>
        <taxon>Viruses</taxon>
        <taxon>Duplodnaviria</taxon>
        <taxon>Heunggongvirae</taxon>
        <taxon>Peploviricota</taxon>
        <taxon>Herviviricetes</taxon>
        <taxon>Herpesvirales</taxon>
        <taxon>Orthoherpesviridae</taxon>
        <taxon>Alphaherpesvirinae</taxon>
        <taxon>Varicellovirus</taxon>
        <taxon>Varicellovirus equidalpha1</taxon>
        <taxon>Equid alphaherpesvirus 1</taxon>
    </lineage>
</organism>
<sequence length="405" mass="45087">MALPRAMRPGGSHPNNFLFNTLPVIDNPVERQRAMAVFERESLRDAFEMLTPIAPSLKNAFLIFNEDGLLIHTSVGGEQVYIPIQTNNMESYSWKKAPPAVFLANVDGRRGLLDAFKAKTQTNVSKVVFEIENYSPSRILTQTVFSARDQTEEDTEMGSDAEGATQTVSSRLVKHEFNNYALMLPTRQPDVSMSLSKAQLNKILGVCKQAGDPITFQCLFDDTLQVRSGDRQVVFSVDYQHADNCGVESSSSLLEKMPMKTKKSAPEPIRGISGRRLFTLVLDEDTNFKQLIQKLKLKNAGAVLNFFLDPDSIPMIGLSTKQPFSVMMFFMCSYPTQPCQVGFSPAAFSSTPMGAGVKRRASEEEESDQPPKKLFPDGKLFKSNFVLLMDKTGAKIPCPEQPMHF</sequence>
<name>PAP_EHV1V</name>
<proteinExistence type="inferred from homology"/>
<dbReference type="EMBL" id="AY464052">
    <property type="protein sequence ID" value="AAS45902.1"/>
    <property type="molecule type" value="Genomic_DNA"/>
</dbReference>
<dbReference type="SMR" id="P84399"/>
<dbReference type="KEGG" id="vg:1487522"/>
<dbReference type="Proteomes" id="UP000008296">
    <property type="component" value="Segment"/>
</dbReference>
<dbReference type="GO" id="GO:0042025">
    <property type="term" value="C:host cell nucleus"/>
    <property type="evidence" value="ECO:0007669"/>
    <property type="project" value="UniProtKB-SubCell"/>
</dbReference>
<dbReference type="GO" id="GO:0003677">
    <property type="term" value="F:DNA binding"/>
    <property type="evidence" value="ECO:0007669"/>
    <property type="project" value="UniProtKB-KW"/>
</dbReference>
<dbReference type="GO" id="GO:0006260">
    <property type="term" value="P:DNA replication"/>
    <property type="evidence" value="ECO:0007669"/>
    <property type="project" value="UniProtKB-KW"/>
</dbReference>
<dbReference type="Gene3D" id="3.70.10.10">
    <property type="match status" value="1"/>
</dbReference>
<dbReference type="InterPro" id="IPR046938">
    <property type="entry name" value="DNA_clamp_sf"/>
</dbReference>
<dbReference type="InterPro" id="IPR003202">
    <property type="entry name" value="Herpes_UL42"/>
</dbReference>
<dbReference type="Pfam" id="PF02282">
    <property type="entry name" value="Herpes_UL42"/>
    <property type="match status" value="2"/>
</dbReference>
<dbReference type="SUPFAM" id="SSF55979">
    <property type="entry name" value="DNA clamp"/>
    <property type="match status" value="2"/>
</dbReference>
<gene>
    <name type="ordered locus">18</name>
</gene>
<keyword id="KW-0235">DNA replication</keyword>
<keyword id="KW-0238">DNA-binding</keyword>
<keyword id="KW-1048">Host nucleus</keyword>
<organismHost>
    <name type="scientific">Equus caballus</name>
    <name type="common">Horse</name>
    <dbReference type="NCBI Taxonomy" id="9796"/>
</organismHost>
<comment type="function">
    <text evidence="1">Plays an essential role in viral DNA replication by acting as the polymerase accessory subunit. Associates with the viral polymerase to increase its processivity and forms high-affinity direct interactions with DNA. Facilitates the origin-binding protein loading onto DNA thus increasing its ability to assemble into a functional complex capable of unwinding duplex DNA (By similarity).</text>
</comment>
<comment type="subunit">
    <text evidence="1">Interacts with the DNA polymerase catalytic subunit. Interacts with the origin-binding protein (By similarity).</text>
</comment>
<comment type="subcellular location">
    <subcellularLocation>
        <location evidence="1">Host nucleus</location>
    </subcellularLocation>
</comment>
<comment type="similarity">
    <text evidence="4">Belongs to the herpesviridae DNA polymerase processivity factor family.</text>
</comment>
<feature type="chain" id="PRO_0000116064" description="DNA polymerase processivity factor">
    <location>
        <begin position="1"/>
        <end position="405"/>
    </location>
</feature>
<feature type="region of interest" description="Disordered" evidence="3">
    <location>
        <begin position="354"/>
        <end position="376"/>
    </location>
</feature>
<feature type="short sequence motif" description="Bipartite nuclear localization signal" evidence="2">
    <location>
        <begin position="358"/>
        <end position="373"/>
    </location>
</feature>
<reference evidence="4 5" key="1">
    <citation type="submission" date="2003-11" db="EMBL/GenBank/DDBJ databases">
        <authorList>
            <person name="Davis-Poynter N."/>
            <person name="Nugent J."/>
            <person name="Birch-Machin I."/>
            <person name="Allen G.P."/>
        </authorList>
    </citation>
    <scope>NUCLEOTIDE SEQUENCE [LARGE SCALE GENOMIC DNA]</scope>
</reference>
<protein>
    <recommendedName>
        <fullName>DNA polymerase processivity factor</fullName>
    </recommendedName>
    <alternativeName>
        <fullName>Polymerase accessory protein</fullName>
        <shortName>PAP</shortName>
    </alternativeName>
</protein>
<evidence type="ECO:0000250" key="1"/>
<evidence type="ECO:0000255" key="2"/>
<evidence type="ECO:0000256" key="3">
    <source>
        <dbReference type="SAM" id="MobiDB-lite"/>
    </source>
</evidence>
<evidence type="ECO:0000305" key="4"/>
<evidence type="ECO:0000312" key="5">
    <source>
        <dbReference type="EMBL" id="AAS45902.1"/>
    </source>
</evidence>
<accession>P84399</accession>
<accession>Q6S6Q3</accession>